<name>VTI13_ARATH</name>
<organism>
    <name type="scientific">Arabidopsis thaliana</name>
    <name type="common">Mouse-ear cress</name>
    <dbReference type="NCBI Taxonomy" id="3702"/>
    <lineage>
        <taxon>Eukaryota</taxon>
        <taxon>Viridiplantae</taxon>
        <taxon>Streptophyta</taxon>
        <taxon>Embryophyta</taxon>
        <taxon>Tracheophyta</taxon>
        <taxon>Spermatophyta</taxon>
        <taxon>Magnoliopsida</taxon>
        <taxon>eudicotyledons</taxon>
        <taxon>Gunneridae</taxon>
        <taxon>Pentapetalae</taxon>
        <taxon>rosids</taxon>
        <taxon>malvids</taxon>
        <taxon>Brassicales</taxon>
        <taxon>Brassicaceae</taxon>
        <taxon>Camelineae</taxon>
        <taxon>Arabidopsis</taxon>
    </lineage>
</organism>
<evidence type="ECO:0000250" key="1">
    <source>
        <dbReference type="UniProtKB" id="Q9SEL5"/>
    </source>
</evidence>
<evidence type="ECO:0000255" key="2"/>
<evidence type="ECO:0000269" key="3">
    <source>
    </source>
</evidence>
<evidence type="ECO:0000269" key="4">
    <source>
    </source>
</evidence>
<evidence type="ECO:0000303" key="5">
    <source>
    </source>
</evidence>
<evidence type="ECO:0000303" key="6">
    <source>
    </source>
</evidence>
<evidence type="ECO:0000305" key="7"/>
<evidence type="ECO:0000312" key="8">
    <source>
        <dbReference type="Araport" id="AT3G29100"/>
    </source>
</evidence>
<evidence type="ECO:0000312" key="9">
    <source>
        <dbReference type="EMBL" id="BAB01986.1"/>
    </source>
</evidence>
<comment type="function">
    <text evidence="1 4">May function as a v-SNARE responsible for targeting vesicles involved in the secretory pathway (By similarity). Involved in actin-dependent endosomal trafficking pathways associated with the vacuole within root hairs and root tip epidermal cells (PubMed:24737717). Essential for cell wall organization and polarized root hair growth (PubMed:24737717). Also required for the localization of SYP41 to the trans-Golgi network in root hair cells (PubMed:24737717).</text>
</comment>
<comment type="subunit">
    <text evidence="1">Forms SNARE complexes with t-SNAREs.</text>
</comment>
<comment type="subcellular location">
    <subcellularLocation>
        <location evidence="3 4">Vacuole membrane</location>
        <topology evidence="2">Single-pass type IV membrane protein</topology>
    </subcellularLocation>
    <subcellularLocation>
        <location evidence="3">Prevacuolar compartment membrane</location>
        <topology evidence="2">Single-pass type IV membrane protein</topology>
    </subcellularLocation>
    <subcellularLocation>
        <location evidence="4">Endosome membrane</location>
        <topology evidence="2">Single-pass type IV membrane protein</topology>
    </subcellularLocation>
    <subcellularLocation>
        <location evidence="4">Early endosome membrane</location>
        <topology evidence="2">Single-pass type IV membrane protein</topology>
    </subcellularLocation>
    <text evidence="4">Present in a mobile endosomal compartment as well as in vacuolar 'bulb'-like structures.</text>
</comment>
<comment type="alternative products">
    <event type="alternative splicing"/>
    <isoform>
        <id>Q9LVP9-1</id>
        <name>1</name>
        <sequence type="displayed"/>
    </isoform>
    <isoform>
        <id>Q9LVP9-2</id>
        <name>2</name>
        <sequence type="described" ref="VSP_013658"/>
    </isoform>
</comment>
<comment type="tissue specificity">
    <text evidence="3 4">Expressed at low levels in roots, stems, flowers and leaves.</text>
</comment>
<comment type="disruption phenotype">
    <text evidence="4">Abnormal cell wall organization in root hair and root epidermal cells, probably due to altered endosomal trafficking, and leading to short and branched root hairs (PubMed:24737717). Mislocalization of SYP41 in root hair cells (PubMed:24737717).</text>
</comment>
<comment type="miscellaneous">
    <molecule>Isoform 2</molecule>
    <text evidence="7">May be due to a competing acceptor splice site.</text>
</comment>
<comment type="similarity">
    <text evidence="7">Belongs to the VTI1 family.</text>
</comment>
<protein>
    <recommendedName>
        <fullName evidence="6">Vesicle transport v-SNARE 13</fullName>
        <shortName evidence="6">AtVTI13</shortName>
    </recommendedName>
    <alternativeName>
        <fullName evidence="6">Vesicle soluble NSF attachment protein receptor 13</fullName>
    </alternativeName>
    <alternativeName>
        <fullName evidence="6">Vesicle transport v-SNARE protein VTI13</fullName>
    </alternativeName>
</protein>
<keyword id="KW-0025">Alternative splicing</keyword>
<keyword id="KW-0175">Coiled coil</keyword>
<keyword id="KW-0967">Endosome</keyword>
<keyword id="KW-0472">Membrane</keyword>
<keyword id="KW-0653">Protein transport</keyword>
<keyword id="KW-1185">Reference proteome</keyword>
<keyword id="KW-0812">Transmembrane</keyword>
<keyword id="KW-1133">Transmembrane helix</keyword>
<keyword id="KW-0813">Transport</keyword>
<keyword id="KW-0926">Vacuole</keyword>
<gene>
    <name evidence="6" type="primary">VTI13</name>
    <name evidence="8" type="ordered locus">At3g29100</name>
    <name evidence="9" type="ORF">MXE2.7</name>
</gene>
<proteinExistence type="evidence at transcript level"/>
<sequence>MSQGFERYERQYCEISANLSKKCTSAIALDGEQKKQNLSEIKSGVEEAEALVKKMDLEARNLPPNVKSSLLVKLREYKSDLNNFKTEVKRITSGNLNATARDELLEAGMADTLTASADQRSRLMMSTDHLGRTTDRIKDSRRTILETEELGVSILQDLHGQRQSLLRAHETLHGVDDNVGKSKKILTTMTRRMNRNKWTIGAIITVLVLAIIFILYFKLTR</sequence>
<feature type="chain" id="PRO_0000218235" description="Vesicle transport v-SNARE 13">
    <location>
        <begin position="1"/>
        <end position="221"/>
    </location>
</feature>
<feature type="topological domain" description="Cytoplasmic" evidence="2">
    <location>
        <begin position="1"/>
        <end position="198"/>
    </location>
</feature>
<feature type="transmembrane region" description="Helical; Anchor for type IV membrane protein" evidence="2">
    <location>
        <begin position="199"/>
        <end position="219"/>
    </location>
</feature>
<feature type="topological domain" description="Vesicular" evidence="2">
    <location>
        <begin position="220"/>
        <end position="221"/>
    </location>
</feature>
<feature type="coiled-coil region" evidence="2">
    <location>
        <begin position="32"/>
        <end position="93"/>
    </location>
</feature>
<feature type="splice variant" id="VSP_013658" description="In isoform 2." evidence="5">
    <location>
        <begin position="1"/>
        <end position="54"/>
    </location>
</feature>
<dbReference type="EMBL" id="AB018121">
    <property type="protein sequence ID" value="BAB01986.1"/>
    <property type="molecule type" value="Genomic_DNA"/>
</dbReference>
<dbReference type="EMBL" id="CP002686">
    <property type="protein sequence ID" value="AEE77536.1"/>
    <property type="molecule type" value="Genomic_DNA"/>
</dbReference>
<dbReference type="EMBL" id="CP002686">
    <property type="protein sequence ID" value="ANM65584.1"/>
    <property type="molecule type" value="Genomic_DNA"/>
</dbReference>
<dbReference type="EMBL" id="CP002686">
    <property type="protein sequence ID" value="ANM65585.1"/>
    <property type="molecule type" value="Genomic_DNA"/>
</dbReference>
<dbReference type="EMBL" id="CP002686">
    <property type="protein sequence ID" value="ANM65586.1"/>
    <property type="molecule type" value="Genomic_DNA"/>
</dbReference>
<dbReference type="EMBL" id="AK118255">
    <property type="protein sequence ID" value="BAC42873.1"/>
    <property type="molecule type" value="mRNA"/>
</dbReference>
<dbReference type="RefSeq" id="NP_001189997.1">
    <molecule id="Q9LVP9-2"/>
    <property type="nucleotide sequence ID" value="NM_001203068.2"/>
</dbReference>
<dbReference type="RefSeq" id="NP_001327542.1">
    <molecule id="Q9LVP9-2"/>
    <property type="nucleotide sequence ID" value="NM_001339005.1"/>
</dbReference>
<dbReference type="RefSeq" id="NP_001327543.1">
    <molecule id="Q9LVP9-2"/>
    <property type="nucleotide sequence ID" value="NM_001339006.1"/>
</dbReference>
<dbReference type="RefSeq" id="NP_001327544.1">
    <molecule id="Q9LVP9-1"/>
    <property type="nucleotide sequence ID" value="NM_001339004.1"/>
</dbReference>
<dbReference type="SMR" id="Q9LVP9"/>
<dbReference type="BioGRID" id="7886">
    <property type="interactions" value="1"/>
</dbReference>
<dbReference type="FunCoup" id="Q9LVP9">
    <property type="interactions" value="3303"/>
</dbReference>
<dbReference type="STRING" id="3702.Q9LVP9"/>
<dbReference type="iPTMnet" id="Q9LVP9"/>
<dbReference type="PaxDb" id="3702-AT3G29100.1"/>
<dbReference type="ProteomicsDB" id="242543">
    <molecule id="Q9LVP9-1"/>
</dbReference>
<dbReference type="EnsemblPlants" id="AT3G29100.2">
    <molecule id="Q9LVP9-2"/>
    <property type="protein sequence ID" value="AT3G29100.2"/>
    <property type="gene ID" value="AT3G29100"/>
</dbReference>
<dbReference type="EnsemblPlants" id="AT3G29100.3">
    <molecule id="Q9LVP9-1"/>
    <property type="protein sequence ID" value="AT3G29100.3"/>
    <property type="gene ID" value="AT3G29100"/>
</dbReference>
<dbReference type="EnsemblPlants" id="AT3G29100.4">
    <molecule id="Q9LVP9-2"/>
    <property type="protein sequence ID" value="AT3G29100.4"/>
    <property type="gene ID" value="AT3G29100"/>
</dbReference>
<dbReference type="EnsemblPlants" id="AT3G29100.5">
    <molecule id="Q9LVP9-2"/>
    <property type="protein sequence ID" value="AT3G29100.5"/>
    <property type="gene ID" value="AT3G29100"/>
</dbReference>
<dbReference type="GeneID" id="822557"/>
<dbReference type="Gramene" id="AT3G29100.2">
    <molecule id="Q9LVP9-2"/>
    <property type="protein sequence ID" value="AT3G29100.2"/>
    <property type="gene ID" value="AT3G29100"/>
</dbReference>
<dbReference type="Gramene" id="AT3G29100.3">
    <molecule id="Q9LVP9-1"/>
    <property type="protein sequence ID" value="AT3G29100.3"/>
    <property type="gene ID" value="AT3G29100"/>
</dbReference>
<dbReference type="Gramene" id="AT3G29100.4">
    <molecule id="Q9LVP9-2"/>
    <property type="protein sequence ID" value="AT3G29100.4"/>
    <property type="gene ID" value="AT3G29100"/>
</dbReference>
<dbReference type="Gramene" id="AT3G29100.5">
    <molecule id="Q9LVP9-2"/>
    <property type="protein sequence ID" value="AT3G29100.5"/>
    <property type="gene ID" value="AT3G29100"/>
</dbReference>
<dbReference type="KEGG" id="ath:AT3G29100"/>
<dbReference type="Araport" id="AT3G29100"/>
<dbReference type="TAIR" id="AT3G29100">
    <property type="gene designation" value="VTI13"/>
</dbReference>
<dbReference type="eggNOG" id="KOG1666">
    <property type="taxonomic scope" value="Eukaryota"/>
</dbReference>
<dbReference type="InParanoid" id="Q9LVP9"/>
<dbReference type="OMA" id="MANKFIM"/>
<dbReference type="PhylomeDB" id="Q9LVP9"/>
<dbReference type="PRO" id="PR:Q9LVP9"/>
<dbReference type="Proteomes" id="UP000006548">
    <property type="component" value="Chromosome 3"/>
</dbReference>
<dbReference type="ExpressionAtlas" id="Q9LVP9">
    <property type="expression patterns" value="baseline and differential"/>
</dbReference>
<dbReference type="GO" id="GO:0031901">
    <property type="term" value="C:early endosome membrane"/>
    <property type="evidence" value="ECO:0000314"/>
    <property type="project" value="UniProtKB"/>
</dbReference>
<dbReference type="GO" id="GO:0010008">
    <property type="term" value="C:endosome membrane"/>
    <property type="evidence" value="ECO:0000314"/>
    <property type="project" value="UniProtKB"/>
</dbReference>
<dbReference type="GO" id="GO:0005794">
    <property type="term" value="C:Golgi apparatus"/>
    <property type="evidence" value="ECO:0007669"/>
    <property type="project" value="InterPro"/>
</dbReference>
<dbReference type="GO" id="GO:0009705">
    <property type="term" value="C:plant-type vacuole membrane"/>
    <property type="evidence" value="ECO:0000314"/>
    <property type="project" value="UniProtKB"/>
</dbReference>
<dbReference type="GO" id="GO:0005484">
    <property type="term" value="F:SNAP receptor activity"/>
    <property type="evidence" value="ECO:0007669"/>
    <property type="project" value="InterPro"/>
</dbReference>
<dbReference type="GO" id="GO:0006886">
    <property type="term" value="P:intracellular protein transport"/>
    <property type="evidence" value="ECO:0007669"/>
    <property type="project" value="InterPro"/>
</dbReference>
<dbReference type="GO" id="GO:0009664">
    <property type="term" value="P:plant-type cell wall organization"/>
    <property type="evidence" value="ECO:0000315"/>
    <property type="project" value="UniProtKB"/>
</dbReference>
<dbReference type="GO" id="GO:0051222">
    <property type="term" value="P:positive regulation of protein transport"/>
    <property type="evidence" value="ECO:0000315"/>
    <property type="project" value="UniProtKB"/>
</dbReference>
<dbReference type="GO" id="GO:0080147">
    <property type="term" value="P:root hair cell development"/>
    <property type="evidence" value="ECO:0000315"/>
    <property type="project" value="UniProtKB"/>
</dbReference>
<dbReference type="GO" id="GO:0016192">
    <property type="term" value="P:vesicle-mediated transport"/>
    <property type="evidence" value="ECO:0007669"/>
    <property type="project" value="InterPro"/>
</dbReference>
<dbReference type="CDD" id="cd15862">
    <property type="entry name" value="SNARE_Vti1"/>
    <property type="match status" value="1"/>
</dbReference>
<dbReference type="FunFam" id="1.20.58.400:FF:000001">
    <property type="entry name" value="Vesicle transport through interaction with t-SNAREs homolog 1A"/>
    <property type="match status" value="1"/>
</dbReference>
<dbReference type="FunFam" id="1.20.5.110:FF:000002">
    <property type="entry name" value="Vesicle transport through interaction with t-SNAREsB"/>
    <property type="match status" value="1"/>
</dbReference>
<dbReference type="Gene3D" id="1.20.5.110">
    <property type="match status" value="1"/>
</dbReference>
<dbReference type="Gene3D" id="1.20.58.400">
    <property type="entry name" value="t-snare proteins"/>
    <property type="match status" value="1"/>
</dbReference>
<dbReference type="InterPro" id="IPR027027">
    <property type="entry name" value="GOSR2/Membrin/Bos1"/>
</dbReference>
<dbReference type="InterPro" id="IPR010989">
    <property type="entry name" value="SNARE"/>
</dbReference>
<dbReference type="InterPro" id="IPR038407">
    <property type="entry name" value="v-SNARE_N_sf"/>
</dbReference>
<dbReference type="InterPro" id="IPR007705">
    <property type="entry name" value="Vesicle_trsprt_v-SNARE_N"/>
</dbReference>
<dbReference type="PANTHER" id="PTHR21230:SF67">
    <property type="entry name" value="VESICLE TRANSPORT V-SNARE 11-RELATED"/>
    <property type="match status" value="1"/>
</dbReference>
<dbReference type="PANTHER" id="PTHR21230">
    <property type="entry name" value="VESICLE TRANSPORT V-SNARE PROTEIN VTI1-RELATED"/>
    <property type="match status" value="1"/>
</dbReference>
<dbReference type="Pfam" id="PF05008">
    <property type="entry name" value="V-SNARE"/>
    <property type="match status" value="1"/>
</dbReference>
<dbReference type="Pfam" id="PF12352">
    <property type="entry name" value="V-SNARE_C"/>
    <property type="match status" value="1"/>
</dbReference>
<dbReference type="PIRSF" id="PIRSF028865">
    <property type="entry name" value="Membrin-2"/>
    <property type="match status" value="1"/>
</dbReference>
<dbReference type="SUPFAM" id="SSF58038">
    <property type="entry name" value="SNARE fusion complex"/>
    <property type="match status" value="1"/>
</dbReference>
<dbReference type="SUPFAM" id="SSF47661">
    <property type="entry name" value="t-snare proteins"/>
    <property type="match status" value="1"/>
</dbReference>
<accession>Q9LVP9</accession>
<accession>A0A1I9LSM6</accession>
<accession>Q8GXG5</accession>
<reference key="1">
    <citation type="journal article" date="2000" name="DNA Res.">
        <title>Structural analysis of Arabidopsis thaliana chromosome 3. I. Sequence features of the regions of 4,504,864 bp covered by sixty P1 and TAC clones.</title>
        <authorList>
            <person name="Sato S."/>
            <person name="Nakamura Y."/>
            <person name="Kaneko T."/>
            <person name="Katoh T."/>
            <person name="Asamizu E."/>
            <person name="Tabata S."/>
        </authorList>
    </citation>
    <scope>NUCLEOTIDE SEQUENCE [LARGE SCALE GENOMIC DNA]</scope>
    <source>
        <strain>cv. Columbia</strain>
    </source>
</reference>
<reference key="2">
    <citation type="journal article" date="2017" name="Plant J.">
        <title>Araport11: a complete reannotation of the Arabidopsis thaliana reference genome.</title>
        <authorList>
            <person name="Cheng C.Y."/>
            <person name="Krishnakumar V."/>
            <person name="Chan A.P."/>
            <person name="Thibaud-Nissen F."/>
            <person name="Schobel S."/>
            <person name="Town C.D."/>
        </authorList>
    </citation>
    <scope>GENOME REANNOTATION</scope>
    <source>
        <strain>cv. Columbia</strain>
    </source>
</reference>
<reference key="3">
    <citation type="journal article" date="2002" name="Science">
        <title>Functional annotation of a full-length Arabidopsis cDNA collection.</title>
        <authorList>
            <person name="Seki M."/>
            <person name="Narusaka M."/>
            <person name="Kamiya A."/>
            <person name="Ishida J."/>
            <person name="Satou M."/>
            <person name="Sakurai T."/>
            <person name="Nakajima M."/>
            <person name="Enju A."/>
            <person name="Akiyama K."/>
            <person name="Oono Y."/>
            <person name="Muramatsu M."/>
            <person name="Hayashizaki Y."/>
            <person name="Kawai J."/>
            <person name="Carninci P."/>
            <person name="Itoh M."/>
            <person name="Ishii Y."/>
            <person name="Arakawa T."/>
            <person name="Shibata K."/>
            <person name="Shinagawa A."/>
            <person name="Shinozaki K."/>
        </authorList>
    </citation>
    <scope>NUCLEOTIDE SEQUENCE [LARGE SCALE MRNA] (ISOFORM 2)</scope>
    <source>
        <strain>cv. Columbia</strain>
    </source>
</reference>
<reference key="4">
    <citation type="journal article" date="2004" name="Cell Struct. Funct.">
        <title>Systematic analysis of SNARE molecules in Arabidopsis: dissection of the post-Golgi network in plant cells.</title>
        <authorList>
            <person name="Uemura T."/>
            <person name="Ueda T."/>
            <person name="Ohniwa R.L."/>
            <person name="Nakano A."/>
            <person name="Takeyasu K."/>
            <person name="Sato M.H."/>
        </authorList>
    </citation>
    <scope>SUBCELLULAR LOCATION</scope>
    <scope>TISSUE SPECIFICITY</scope>
</reference>
<reference key="5">
    <citation type="journal article" date="2014" name="Ann. Bot.">
        <title>SNARE VTI13 plays a unique role in endosomal trafficking pathways associated with the vacuole and is essential for cell wall organization and root hair growth in arabidopsis.</title>
        <authorList>
            <person name="Larson E.R."/>
            <person name="Domozych D.S."/>
            <person name="Tierney M.L."/>
        </authorList>
    </citation>
    <scope>FUNCTION</scope>
    <scope>DISRUPTION PHENOTYPE</scope>
    <scope>SUBCELLULAR LOCATION</scope>
    <scope>TISSUE SPECIFICITY</scope>
    <source>
        <strain>cv. Columbia</strain>
    </source>
</reference>